<organism>
    <name type="scientific">Leptospira borgpetersenii serovar Hardjo-bovis (strain JB197)</name>
    <dbReference type="NCBI Taxonomy" id="355277"/>
    <lineage>
        <taxon>Bacteria</taxon>
        <taxon>Pseudomonadati</taxon>
        <taxon>Spirochaetota</taxon>
        <taxon>Spirochaetia</taxon>
        <taxon>Leptospirales</taxon>
        <taxon>Leptospiraceae</taxon>
        <taxon>Leptospira</taxon>
    </lineage>
</organism>
<comment type="function">
    <text evidence="1">Forms part of the ribosomal stalk, playing a central role in the interaction of the ribosome with GTP-bound translation factors.</text>
</comment>
<comment type="subunit">
    <text evidence="1">Part of the ribosomal stalk of the 50S ribosomal subunit. The N-terminus interacts with L11 and the large rRNA to form the base of the stalk. The C-terminus forms an elongated spine to which L12 dimers bind in a sequential fashion forming a multimeric L10(L12)X complex.</text>
</comment>
<comment type="similarity">
    <text evidence="1">Belongs to the universal ribosomal protein uL10 family.</text>
</comment>
<reference key="1">
    <citation type="journal article" date="2006" name="Proc. Natl. Acad. Sci. U.S.A.">
        <title>Genome reduction in Leptospira borgpetersenii reflects limited transmission potential.</title>
        <authorList>
            <person name="Bulach D.M."/>
            <person name="Zuerner R.L."/>
            <person name="Wilson P."/>
            <person name="Seemann T."/>
            <person name="McGrath A."/>
            <person name="Cullen P.A."/>
            <person name="Davis J."/>
            <person name="Johnson M."/>
            <person name="Kuczek E."/>
            <person name="Alt D.P."/>
            <person name="Peterson-Burch B."/>
            <person name="Coppel R.L."/>
            <person name="Rood J.I."/>
            <person name="Davies J.K."/>
            <person name="Adler B."/>
        </authorList>
    </citation>
    <scope>NUCLEOTIDE SEQUENCE [LARGE SCALE GENOMIC DNA]</scope>
    <source>
        <strain>JB197</strain>
    </source>
</reference>
<gene>
    <name evidence="1" type="primary">rplJ</name>
    <name type="ordered locus">LBJ_2367</name>
</gene>
<protein>
    <recommendedName>
        <fullName evidence="1">Large ribosomal subunit protein uL10</fullName>
    </recommendedName>
    <alternativeName>
        <fullName evidence="2">50S ribosomal protein L10</fullName>
    </alternativeName>
</protein>
<name>RL10_LEPBJ</name>
<feature type="chain" id="PRO_1000005525" description="Large ribosomal subunit protein uL10">
    <location>
        <begin position="1"/>
        <end position="177"/>
    </location>
</feature>
<accession>Q04QI7</accession>
<dbReference type="EMBL" id="CP000350">
    <property type="protein sequence ID" value="ABJ76833.1"/>
    <property type="molecule type" value="Genomic_DNA"/>
</dbReference>
<dbReference type="RefSeq" id="WP_011669620.1">
    <property type="nucleotide sequence ID" value="NC_008510.1"/>
</dbReference>
<dbReference type="SMR" id="Q04QI7"/>
<dbReference type="KEGG" id="lbj:LBJ_2367"/>
<dbReference type="HOGENOM" id="CLU_092227_1_1_12"/>
<dbReference type="Proteomes" id="UP000000656">
    <property type="component" value="Chromosome 1"/>
</dbReference>
<dbReference type="GO" id="GO:1990904">
    <property type="term" value="C:ribonucleoprotein complex"/>
    <property type="evidence" value="ECO:0007669"/>
    <property type="project" value="UniProtKB-KW"/>
</dbReference>
<dbReference type="GO" id="GO:0005840">
    <property type="term" value="C:ribosome"/>
    <property type="evidence" value="ECO:0007669"/>
    <property type="project" value="UniProtKB-KW"/>
</dbReference>
<dbReference type="GO" id="GO:0070180">
    <property type="term" value="F:large ribosomal subunit rRNA binding"/>
    <property type="evidence" value="ECO:0007669"/>
    <property type="project" value="UniProtKB-UniRule"/>
</dbReference>
<dbReference type="GO" id="GO:0006412">
    <property type="term" value="P:translation"/>
    <property type="evidence" value="ECO:0007669"/>
    <property type="project" value="UniProtKB-UniRule"/>
</dbReference>
<dbReference type="CDD" id="cd05797">
    <property type="entry name" value="Ribosomal_L10"/>
    <property type="match status" value="1"/>
</dbReference>
<dbReference type="FunFam" id="3.30.70.1730:FF:000010">
    <property type="entry name" value="50S ribosomal protein L10"/>
    <property type="match status" value="1"/>
</dbReference>
<dbReference type="Gene3D" id="3.30.70.1730">
    <property type="match status" value="1"/>
</dbReference>
<dbReference type="Gene3D" id="6.10.250.290">
    <property type="match status" value="1"/>
</dbReference>
<dbReference type="HAMAP" id="MF_00362">
    <property type="entry name" value="Ribosomal_uL10"/>
    <property type="match status" value="1"/>
</dbReference>
<dbReference type="InterPro" id="IPR001790">
    <property type="entry name" value="Ribosomal_uL10"/>
</dbReference>
<dbReference type="InterPro" id="IPR043141">
    <property type="entry name" value="Ribosomal_uL10-like_sf"/>
</dbReference>
<dbReference type="InterPro" id="IPR022973">
    <property type="entry name" value="Ribosomal_uL10_bac"/>
</dbReference>
<dbReference type="InterPro" id="IPR047865">
    <property type="entry name" value="Ribosomal_uL10_bac_type"/>
</dbReference>
<dbReference type="NCBIfam" id="NF000955">
    <property type="entry name" value="PRK00099.1-1"/>
    <property type="match status" value="1"/>
</dbReference>
<dbReference type="PANTHER" id="PTHR11560">
    <property type="entry name" value="39S RIBOSOMAL PROTEIN L10, MITOCHONDRIAL"/>
    <property type="match status" value="1"/>
</dbReference>
<dbReference type="Pfam" id="PF00466">
    <property type="entry name" value="Ribosomal_L10"/>
    <property type="match status" value="1"/>
</dbReference>
<dbReference type="SUPFAM" id="SSF160369">
    <property type="entry name" value="Ribosomal protein L10-like"/>
    <property type="match status" value="1"/>
</dbReference>
<keyword id="KW-0687">Ribonucleoprotein</keyword>
<keyword id="KW-0689">Ribosomal protein</keyword>
<keyword id="KW-0694">RNA-binding</keyword>
<keyword id="KW-0699">rRNA-binding</keyword>
<evidence type="ECO:0000255" key="1">
    <source>
        <dbReference type="HAMAP-Rule" id="MF_00362"/>
    </source>
</evidence>
<evidence type="ECO:0000305" key="2"/>
<sequence>MANQEKVEAVALLKGKLEEKNNFILACYSGLTVEEITGLRAQLRKEGSEMKVLKNNLFLRALKESGAHKDKNISFGPEYQGPLAAIFAKDNLPTVAKVCKDFAKVNKNLIVRAGYMDGSVLDANGVEAIAGLPSREQLLAMIAGGINAPARTIASGINQIVASLARAIQATAEKNNA</sequence>
<proteinExistence type="inferred from homology"/>